<gene>
    <name evidence="1" type="primary">ccmE</name>
    <name evidence="1" type="synonym">cycJ</name>
    <name type="ordered locus">YPDSF_2022</name>
</gene>
<sequence length="164" mass="18033">MNPRRKSRLYLAMVVLIGISLTTTLVLYALRSNIDLFYTPGEILQGKGERHEKPAIGQRLRIGGMVMPGSVQRDAKTLEMSFQVYDARGAVTVTYTGILPDLFREGQGVVAQGVFAEGNTVHAKEVLAKHDEKYTPPEVEEAMKENHSRPAAAYRGTNTTGNAL</sequence>
<protein>
    <recommendedName>
        <fullName evidence="1">Cytochrome c-type biogenesis protein CcmE</fullName>
    </recommendedName>
    <alternativeName>
        <fullName evidence="1">Cytochrome c maturation protein E</fullName>
    </alternativeName>
    <alternativeName>
        <fullName evidence="1">Heme chaperone CcmE</fullName>
    </alternativeName>
</protein>
<keyword id="KW-0997">Cell inner membrane</keyword>
<keyword id="KW-1003">Cell membrane</keyword>
<keyword id="KW-0201">Cytochrome c-type biogenesis</keyword>
<keyword id="KW-0349">Heme</keyword>
<keyword id="KW-0408">Iron</keyword>
<keyword id="KW-0472">Membrane</keyword>
<keyword id="KW-0479">Metal-binding</keyword>
<keyword id="KW-0735">Signal-anchor</keyword>
<keyword id="KW-0812">Transmembrane</keyword>
<keyword id="KW-1133">Transmembrane helix</keyword>
<proteinExistence type="inferred from homology"/>
<name>CCME_YERPP</name>
<organism>
    <name type="scientific">Yersinia pestis (strain Pestoides F)</name>
    <dbReference type="NCBI Taxonomy" id="386656"/>
    <lineage>
        <taxon>Bacteria</taxon>
        <taxon>Pseudomonadati</taxon>
        <taxon>Pseudomonadota</taxon>
        <taxon>Gammaproteobacteria</taxon>
        <taxon>Enterobacterales</taxon>
        <taxon>Yersiniaceae</taxon>
        <taxon>Yersinia</taxon>
    </lineage>
</organism>
<reference key="1">
    <citation type="submission" date="2007-02" db="EMBL/GenBank/DDBJ databases">
        <title>Complete sequence of chromosome of Yersinia pestis Pestoides F.</title>
        <authorList>
            <consortium name="US DOE Joint Genome Institute"/>
            <person name="Copeland A."/>
            <person name="Lucas S."/>
            <person name="Lapidus A."/>
            <person name="Barry K."/>
            <person name="Detter J.C."/>
            <person name="Glavina del Rio T."/>
            <person name="Hammon N."/>
            <person name="Israni S."/>
            <person name="Dalin E."/>
            <person name="Tice H."/>
            <person name="Pitluck S."/>
            <person name="Di Bartolo G."/>
            <person name="Chain P."/>
            <person name="Malfatti S."/>
            <person name="Shin M."/>
            <person name="Vergez L."/>
            <person name="Schmutz J."/>
            <person name="Larimer F."/>
            <person name="Land M."/>
            <person name="Hauser L."/>
            <person name="Worsham P."/>
            <person name="Chu M."/>
            <person name="Bearden S."/>
            <person name="Garcia E."/>
            <person name="Richardson P."/>
        </authorList>
    </citation>
    <scope>NUCLEOTIDE SEQUENCE [LARGE SCALE GENOMIC DNA]</scope>
    <source>
        <strain>Pestoides F</strain>
    </source>
</reference>
<accession>A4TM91</accession>
<evidence type="ECO:0000255" key="1">
    <source>
        <dbReference type="HAMAP-Rule" id="MF_01959"/>
    </source>
</evidence>
<evidence type="ECO:0000256" key="2">
    <source>
        <dbReference type="SAM" id="MobiDB-lite"/>
    </source>
</evidence>
<dbReference type="EMBL" id="CP000668">
    <property type="protein sequence ID" value="ABP40403.1"/>
    <property type="molecule type" value="Genomic_DNA"/>
</dbReference>
<dbReference type="RefSeq" id="WP_002209697.1">
    <property type="nucleotide sequence ID" value="NZ_CP009715.1"/>
</dbReference>
<dbReference type="SMR" id="A4TM91"/>
<dbReference type="GeneID" id="57975951"/>
<dbReference type="KEGG" id="ypp:YPDSF_2022"/>
<dbReference type="PATRIC" id="fig|386656.14.peg.3493"/>
<dbReference type="GO" id="GO:0005886">
    <property type="term" value="C:plasma membrane"/>
    <property type="evidence" value="ECO:0007669"/>
    <property type="project" value="UniProtKB-SubCell"/>
</dbReference>
<dbReference type="GO" id="GO:0020037">
    <property type="term" value="F:heme binding"/>
    <property type="evidence" value="ECO:0007669"/>
    <property type="project" value="InterPro"/>
</dbReference>
<dbReference type="GO" id="GO:0046872">
    <property type="term" value="F:metal ion binding"/>
    <property type="evidence" value="ECO:0007669"/>
    <property type="project" value="UniProtKB-KW"/>
</dbReference>
<dbReference type="GO" id="GO:0017004">
    <property type="term" value="P:cytochrome complex assembly"/>
    <property type="evidence" value="ECO:0007669"/>
    <property type="project" value="UniProtKB-KW"/>
</dbReference>
<dbReference type="FunFam" id="2.40.50.140:FF:000104">
    <property type="entry name" value="Cytochrome c-type biogenesis protein CcmE"/>
    <property type="match status" value="1"/>
</dbReference>
<dbReference type="Gene3D" id="2.40.50.140">
    <property type="entry name" value="Nucleic acid-binding proteins"/>
    <property type="match status" value="1"/>
</dbReference>
<dbReference type="HAMAP" id="MF_01959">
    <property type="entry name" value="CcmE"/>
    <property type="match status" value="1"/>
</dbReference>
<dbReference type="InterPro" id="IPR004329">
    <property type="entry name" value="CcmE"/>
</dbReference>
<dbReference type="InterPro" id="IPR036127">
    <property type="entry name" value="CcmE-like_sf"/>
</dbReference>
<dbReference type="InterPro" id="IPR012340">
    <property type="entry name" value="NA-bd_OB-fold"/>
</dbReference>
<dbReference type="NCBIfam" id="NF009635">
    <property type="entry name" value="PRK13150.1"/>
    <property type="match status" value="1"/>
</dbReference>
<dbReference type="NCBIfam" id="NF009638">
    <property type="entry name" value="PRK13165.1"/>
    <property type="match status" value="1"/>
</dbReference>
<dbReference type="NCBIfam" id="NF009727">
    <property type="entry name" value="PRK13254.1-1"/>
    <property type="match status" value="1"/>
</dbReference>
<dbReference type="NCBIfam" id="NF009729">
    <property type="entry name" value="PRK13254.1-3"/>
    <property type="match status" value="1"/>
</dbReference>
<dbReference type="NCBIfam" id="NF009731">
    <property type="entry name" value="PRK13254.1-5"/>
    <property type="match status" value="1"/>
</dbReference>
<dbReference type="PANTHER" id="PTHR34128">
    <property type="entry name" value="CYTOCHROME C-TYPE BIOGENESIS PROTEIN CCME HOMOLOG, MITOCHONDRIAL"/>
    <property type="match status" value="1"/>
</dbReference>
<dbReference type="PANTHER" id="PTHR34128:SF2">
    <property type="entry name" value="CYTOCHROME C-TYPE BIOGENESIS PROTEIN CCME HOMOLOG, MITOCHONDRIAL"/>
    <property type="match status" value="1"/>
</dbReference>
<dbReference type="Pfam" id="PF03100">
    <property type="entry name" value="CcmE"/>
    <property type="match status" value="1"/>
</dbReference>
<dbReference type="SUPFAM" id="SSF82093">
    <property type="entry name" value="Heme chaperone CcmE"/>
    <property type="match status" value="1"/>
</dbReference>
<feature type="chain" id="PRO_1000070872" description="Cytochrome c-type biogenesis protein CcmE">
    <location>
        <begin position="1"/>
        <end position="164"/>
    </location>
</feature>
<feature type="topological domain" description="Cytoplasmic" evidence="1">
    <location>
        <begin position="1"/>
        <end position="8"/>
    </location>
</feature>
<feature type="transmembrane region" description="Helical; Signal-anchor for type II membrane protein" evidence="1">
    <location>
        <begin position="9"/>
        <end position="29"/>
    </location>
</feature>
<feature type="topological domain" description="Periplasmic" evidence="1">
    <location>
        <begin position="30"/>
        <end position="164"/>
    </location>
</feature>
<feature type="region of interest" description="Disordered" evidence="2">
    <location>
        <begin position="140"/>
        <end position="164"/>
    </location>
</feature>
<feature type="binding site" description="covalent" evidence="1">
    <location>
        <position position="130"/>
    </location>
    <ligand>
        <name>heme</name>
        <dbReference type="ChEBI" id="CHEBI:30413"/>
    </ligand>
</feature>
<feature type="binding site" description="axial binding residue" evidence="1">
    <location>
        <position position="134"/>
    </location>
    <ligand>
        <name>heme</name>
        <dbReference type="ChEBI" id="CHEBI:30413"/>
    </ligand>
    <ligandPart>
        <name>Fe</name>
        <dbReference type="ChEBI" id="CHEBI:18248"/>
    </ligandPart>
</feature>
<comment type="function">
    <text evidence="1">Heme chaperone required for the biogenesis of c-type cytochromes. Transiently binds heme delivered by CcmC and transfers the heme to apo-cytochromes in a process facilitated by CcmF and CcmH.</text>
</comment>
<comment type="subcellular location">
    <subcellularLocation>
        <location evidence="1">Cell inner membrane</location>
        <topology evidence="1">Single-pass type II membrane protein</topology>
        <orientation evidence="1">Periplasmic side</orientation>
    </subcellularLocation>
</comment>
<comment type="similarity">
    <text evidence="1">Belongs to the CcmE/CycJ family.</text>
</comment>